<sequence>MATIFFADPELVIGHGRRVLFVNPDDLQLFKEIELPPDLATCGLKVADSKEQHCQHEQQDVAAAGSAKQSSNTASASASKAKAIEVSIQNVSYSPDRQLLAITTTGGQKALLLYRSRMEHARLLSVRPLARASSALRFCSDGSSVLVTDKTGDCYQYDCVEVEAAPRLLLGHLSVVFDILWTDDQQHIITCDRDDKIRVTNYPATFDIHSYCLGHKEFVSGLALLTEQHIVSSSGDKTLRVWNFIEGKELLIHQLPAPAVRLQVQQLEPEKVYQVAVLFYDHVDGVAIYRLERSSGDNWAITATTVVRADAGLWNICNFTLTGNRVYVTGAENECLAIKAYDIGSGETSTSVPDGWVKMVLRGLEAEGVAYLPEDLSVWFKKRFDNVSDYLERKKRRIEEQQQQKCG</sequence>
<evidence type="ECO:0000250" key="1">
    <source>
        <dbReference type="UniProtKB" id="Q9W415"/>
    </source>
</evidence>
<evidence type="ECO:0000255" key="2">
    <source>
        <dbReference type="HAMAP-Rule" id="MF_03056"/>
    </source>
</evidence>
<gene>
    <name evidence="2" type="primary">wuho</name>
    <name type="ORF">GF21256</name>
</gene>
<accession>B3MRC6</accession>
<protein>
    <recommendedName>
        <fullName evidence="2">tRNA (guanine-N(7)-)-methyltransferase non-catalytic subunit wuho</fullName>
    </recommendedName>
</protein>
<dbReference type="EMBL" id="CH902622">
    <property type="protein sequence ID" value="EDV34331.1"/>
    <property type="molecule type" value="Genomic_DNA"/>
</dbReference>
<dbReference type="SMR" id="B3MRC6"/>
<dbReference type="FunCoup" id="B3MRC6">
    <property type="interactions" value="644"/>
</dbReference>
<dbReference type="STRING" id="7217.B3MRC6"/>
<dbReference type="EnsemblMetazoa" id="FBtr0125956">
    <property type="protein sequence ID" value="FBpp0124448"/>
    <property type="gene ID" value="FBgn0098258"/>
</dbReference>
<dbReference type="EnsemblMetazoa" id="XM_001963846.4">
    <property type="protein sequence ID" value="XP_001963882.1"/>
    <property type="gene ID" value="LOC6503940"/>
</dbReference>
<dbReference type="GeneID" id="6503940"/>
<dbReference type="KEGG" id="dan:6503940"/>
<dbReference type="CTD" id="31566"/>
<dbReference type="eggNOG" id="KOG3914">
    <property type="taxonomic scope" value="Eukaryota"/>
</dbReference>
<dbReference type="HOGENOM" id="CLU_054270_0_0_1"/>
<dbReference type="InParanoid" id="B3MRC6"/>
<dbReference type="OMA" id="SVWFKKR"/>
<dbReference type="OrthoDB" id="371245at2759"/>
<dbReference type="PhylomeDB" id="B3MRC6"/>
<dbReference type="UniPathway" id="UPA00989"/>
<dbReference type="Proteomes" id="UP000007801">
    <property type="component" value="Unassembled WGS sequence"/>
</dbReference>
<dbReference type="GO" id="GO:0005829">
    <property type="term" value="C:cytosol"/>
    <property type="evidence" value="ECO:0007669"/>
    <property type="project" value="TreeGrafter"/>
</dbReference>
<dbReference type="GO" id="GO:0001674">
    <property type="term" value="C:female germ cell nucleus"/>
    <property type="evidence" value="ECO:0000250"/>
    <property type="project" value="UniProtKB"/>
</dbReference>
<dbReference type="GO" id="GO:0001673">
    <property type="term" value="C:male germ cell nucleus"/>
    <property type="evidence" value="ECO:0000250"/>
    <property type="project" value="UniProtKB"/>
</dbReference>
<dbReference type="GO" id="GO:0005634">
    <property type="term" value="C:nucleus"/>
    <property type="evidence" value="ECO:0000250"/>
    <property type="project" value="UniProtKB"/>
</dbReference>
<dbReference type="GO" id="GO:0106143">
    <property type="term" value="C:tRNA (m7G46) methyltransferase complex"/>
    <property type="evidence" value="ECO:0007669"/>
    <property type="project" value="EnsemblMetazoa"/>
</dbReference>
<dbReference type="GO" id="GO:0048477">
    <property type="term" value="P:oogenesis"/>
    <property type="evidence" value="ECO:0000250"/>
    <property type="project" value="UniProtKB"/>
</dbReference>
<dbReference type="GO" id="GO:0007283">
    <property type="term" value="P:spermatogenesis"/>
    <property type="evidence" value="ECO:0000250"/>
    <property type="project" value="UniProtKB"/>
</dbReference>
<dbReference type="GO" id="GO:0106004">
    <property type="term" value="P:tRNA (guanine-N7)-methylation"/>
    <property type="evidence" value="ECO:0007669"/>
    <property type="project" value="UniProtKB-UniRule"/>
</dbReference>
<dbReference type="FunFam" id="2.130.10.10:FF:002224">
    <property type="entry name" value="tRNA (guanine-N(7)-)-methyltransferase non-catalytic subunit wuho"/>
    <property type="match status" value="1"/>
</dbReference>
<dbReference type="Gene3D" id="2.130.10.10">
    <property type="entry name" value="YVTN repeat-like/Quinoprotein amine dehydrogenase"/>
    <property type="match status" value="1"/>
</dbReference>
<dbReference type="HAMAP" id="MF_03056">
    <property type="entry name" value="TRM82"/>
    <property type="match status" value="1"/>
</dbReference>
<dbReference type="InterPro" id="IPR011044">
    <property type="entry name" value="Quino_amine_DH_bsu"/>
</dbReference>
<dbReference type="InterPro" id="IPR028884">
    <property type="entry name" value="Trm82"/>
</dbReference>
<dbReference type="InterPro" id="IPR015943">
    <property type="entry name" value="WD40/YVTN_repeat-like_dom_sf"/>
</dbReference>
<dbReference type="InterPro" id="IPR001680">
    <property type="entry name" value="WD40_rpt"/>
</dbReference>
<dbReference type="PANTHER" id="PTHR16288:SF0">
    <property type="entry name" value="TRNA (GUANINE-N(7)-)-METHYLTRANSFERASE NON-CATALYTIC SUBUNIT WDR4"/>
    <property type="match status" value="1"/>
</dbReference>
<dbReference type="PANTHER" id="PTHR16288">
    <property type="entry name" value="WD40 REPEAT PROTEIN 4"/>
    <property type="match status" value="1"/>
</dbReference>
<dbReference type="Pfam" id="PF00400">
    <property type="entry name" value="WD40"/>
    <property type="match status" value="2"/>
</dbReference>
<dbReference type="SMART" id="SM00320">
    <property type="entry name" value="WD40"/>
    <property type="match status" value="2"/>
</dbReference>
<dbReference type="SUPFAM" id="SSF50969">
    <property type="entry name" value="YVTN repeat-like/Quinoprotein amine dehydrogenase"/>
    <property type="match status" value="1"/>
</dbReference>
<dbReference type="PROSITE" id="PS00678">
    <property type="entry name" value="WD_REPEATS_1"/>
    <property type="match status" value="1"/>
</dbReference>
<dbReference type="PROSITE" id="PS50082">
    <property type="entry name" value="WD_REPEATS_2"/>
    <property type="match status" value="1"/>
</dbReference>
<dbReference type="PROSITE" id="PS50294">
    <property type="entry name" value="WD_REPEATS_REGION"/>
    <property type="match status" value="1"/>
</dbReference>
<reference key="1">
    <citation type="journal article" date="2007" name="Nature">
        <title>Evolution of genes and genomes on the Drosophila phylogeny.</title>
        <authorList>
            <consortium name="Drosophila 12 genomes consortium"/>
        </authorList>
    </citation>
    <scope>NUCLEOTIDE SEQUENCE [LARGE SCALE GENOMIC DNA]</scope>
    <source>
        <strain>Tucson 14024-0371.13</strain>
    </source>
</reference>
<organism>
    <name type="scientific">Drosophila ananassae</name>
    <name type="common">Fruit fly</name>
    <dbReference type="NCBI Taxonomy" id="7217"/>
    <lineage>
        <taxon>Eukaryota</taxon>
        <taxon>Metazoa</taxon>
        <taxon>Ecdysozoa</taxon>
        <taxon>Arthropoda</taxon>
        <taxon>Hexapoda</taxon>
        <taxon>Insecta</taxon>
        <taxon>Pterygota</taxon>
        <taxon>Neoptera</taxon>
        <taxon>Endopterygota</taxon>
        <taxon>Diptera</taxon>
        <taxon>Brachycera</taxon>
        <taxon>Muscomorpha</taxon>
        <taxon>Ephydroidea</taxon>
        <taxon>Drosophilidae</taxon>
        <taxon>Drosophila</taxon>
        <taxon>Sophophora</taxon>
    </lineage>
</organism>
<proteinExistence type="inferred from homology"/>
<keyword id="KW-0963">Cytoplasm</keyword>
<keyword id="KW-0217">Developmental protein</keyword>
<keyword id="KW-0221">Differentiation</keyword>
<keyword id="KW-0539">Nucleus</keyword>
<keyword id="KW-0896">Oogenesis</keyword>
<keyword id="KW-1185">Reference proteome</keyword>
<keyword id="KW-0677">Repeat</keyword>
<keyword id="KW-0744">Spermatogenesis</keyword>
<keyword id="KW-0819">tRNA processing</keyword>
<keyword id="KW-0853">WD repeat</keyword>
<comment type="function">
    <text evidence="1 2">Required for the Mettl1-dependent formation of N(7)-methylguanine at position 46 (m7G46) in tRNA (By similarity). In the Mettl1-wuho methyltransferase complex, it is required to stabilize and induce conformational changes of the catalytic subunit (By similarity). Required for binding of nanos mRNA and repression of translation by the mei-P26-bgcn-bam-sxl complex. May cooperate with mei-P26 and nanos to derepress the BMP signaling pathway. May cooperate with mei-P26 to suppress expression of a subset of microRNAs. May cooperate with mei-P26 to regulate bam expression levels in germline cells during gametogenesis. Required to promote mitosis to meiosis transition during gametogenesis. May regulate germline cell division in part by regulating ribosome biogenesis (By similarity).</text>
</comment>
<comment type="pathway">
    <text evidence="2">tRNA modification; N(7)-methylguanine-tRNA biosynthesis.</text>
</comment>
<comment type="subunit">
    <text evidence="1 2">Forms a heterodimer with the catalytic subunit Mettl1 (By similarity). Interacts with mei-P26 and weakly interacts with bgcn; required for the function or formation of the mei-P26-bgcn-bam-sxl complex. Interacts with nanos; may be involved in mei-P26-dependent derepression of the BMP signaling pathway. Interacts with Myc; the interaction may be mediated by mei-P26 and may be involved in the regulation of ribosome biogenesis (By similarity).</text>
</comment>
<comment type="subcellular location">
    <subcellularLocation>
        <location evidence="1 2">Nucleus</location>
    </subcellularLocation>
    <subcellularLocation>
        <location evidence="1">Cytoplasm</location>
    </subcellularLocation>
    <text evidence="1">Localized to the nuclei of nurse cells, follicle cells and oocytes at early stages, from germarium to stage 4 egg chambers. Also present in the nuclei of spermatocytes and in the apical cells of the testes. In the cytoplasm of all germline and somatic cells of the ovary.</text>
</comment>
<comment type="tissue specificity">
    <text evidence="1">In testis, it is present at high level in hub cells, a niche for germline stem cells of testis. Ubiquitously expressed in all testicular cells throughout spermatogenesis. Ubiquitously expressed in all germline and somatic cells of the ovary.</text>
</comment>
<comment type="miscellaneous">
    <text evidence="1">Wuho means 'no progeny' in Chinese.</text>
</comment>
<comment type="similarity">
    <text evidence="2">Belongs to the WD repeat TRM82 family.</text>
</comment>
<feature type="chain" id="PRO_0000370542" description="tRNA (guanine-N(7)-)-methyltransferase non-catalytic subunit wuho">
    <location>
        <begin position="1"/>
        <end position="407"/>
    </location>
</feature>
<feature type="repeat" description="WD 1">
    <location>
        <begin position="83"/>
        <end position="124"/>
    </location>
</feature>
<feature type="repeat" description="WD 2">
    <location>
        <begin position="171"/>
        <end position="210"/>
    </location>
</feature>
<feature type="repeat" description="WD 3">
    <location>
        <begin position="214"/>
        <end position="252"/>
    </location>
</feature>
<name>WUHO_DROAN</name>